<reference key="1">
    <citation type="journal article" date="2004" name="J. Biol. Chem.">
        <title>Identification on mouse chromosome 8 of new beta-defensin genes with regionally specific expression in the male reproductive organ.</title>
        <authorList>
            <person name="Zaballos A."/>
            <person name="Villares R."/>
            <person name="Albar J.P."/>
            <person name="Martinez-A C."/>
            <person name="Marquez G."/>
        </authorList>
    </citation>
    <scope>NUCLEOTIDE SEQUENCE [MRNA]</scope>
    <scope>TISSUE SPECIFICITY</scope>
    <source>
        <strain>BALB/cJ</strain>
        <tissue>Epididymis</tissue>
    </source>
</reference>
<reference key="2">
    <citation type="submission" date="2003-07" db="EMBL/GenBank/DDBJ databases">
        <title>Amino acid residues subject to positive selection in murine b-defensin antimicrobial peptides.</title>
        <authorList>
            <person name="Maxwell A."/>
            <person name="Dorin J.R."/>
        </authorList>
    </citation>
    <scope>NUCLEOTIDE SEQUENCE [MRNA]</scope>
    <source>
        <strain>C57BL/6J</strain>
    </source>
</reference>
<evidence type="ECO:0000250" key="1"/>
<evidence type="ECO:0000255" key="2"/>
<evidence type="ECO:0000269" key="3">
    <source>
    </source>
</evidence>
<evidence type="ECO:0000305" key="4"/>
<feature type="signal peptide" evidence="2">
    <location>
        <begin position="1"/>
        <end position="23"/>
    </location>
</feature>
<feature type="chain" id="PRO_0000006951" description="Beta-defensin 39">
    <location>
        <begin position="24"/>
        <end position="74"/>
    </location>
</feature>
<feature type="disulfide bond" evidence="1">
    <location>
        <begin position="29"/>
        <end position="58"/>
    </location>
</feature>
<feature type="disulfide bond" evidence="1">
    <location>
        <begin position="36"/>
        <end position="51"/>
    </location>
</feature>
<feature type="disulfide bond" evidence="1">
    <location>
        <begin position="41"/>
        <end position="59"/>
    </location>
</feature>
<feature type="sequence conflict" description="In Ref. 2; CAE17669." evidence="4" ref="2">
    <original>K</original>
    <variation>R</variation>
    <location>
        <position position="54"/>
    </location>
</feature>
<sequence>MKISYFLLLILSLGSSQINPVSGDDSIQCFQKNNTCHTNQCPYFQDEIGTCYDKRGKCCQKRLLHIRVPRKKKV</sequence>
<keyword id="KW-0044">Antibiotic</keyword>
<keyword id="KW-0929">Antimicrobial</keyword>
<keyword id="KW-0211">Defensin</keyword>
<keyword id="KW-1015">Disulfide bond</keyword>
<keyword id="KW-1185">Reference proteome</keyword>
<keyword id="KW-0964">Secreted</keyword>
<keyword id="KW-0732">Signal</keyword>
<proteinExistence type="evidence at transcript level"/>
<name>DFB39_MOUSE</name>
<dbReference type="EMBL" id="AJ575425">
    <property type="protein sequence ID" value="CAE01398.1"/>
    <property type="molecule type" value="mRNA"/>
</dbReference>
<dbReference type="EMBL" id="AJ578472">
    <property type="protein sequence ID" value="CAE17669.1"/>
    <property type="molecule type" value="mRNA"/>
</dbReference>
<dbReference type="CCDS" id="CCDS22130.1"/>
<dbReference type="RefSeq" id="NP_898859.2">
    <property type="nucleotide sequence ID" value="NM_183038.2"/>
</dbReference>
<dbReference type="SMR" id="Q70KL3"/>
<dbReference type="FunCoup" id="Q70KL3">
    <property type="interactions" value="32"/>
</dbReference>
<dbReference type="STRING" id="10090.ENSMUSP00000074947"/>
<dbReference type="PaxDb" id="10090-ENSMUSP00000074947"/>
<dbReference type="DNASU" id="360214"/>
<dbReference type="GeneID" id="360214"/>
<dbReference type="KEGG" id="mmu:360214"/>
<dbReference type="UCSC" id="uc009lab.1">
    <property type="organism name" value="mouse"/>
</dbReference>
<dbReference type="AGR" id="MGI:2672974"/>
<dbReference type="CTD" id="360214"/>
<dbReference type="MGI" id="MGI:2672974">
    <property type="gene designation" value="Defb39"/>
</dbReference>
<dbReference type="InParanoid" id="Q70KL3"/>
<dbReference type="OrthoDB" id="9622366at2759"/>
<dbReference type="PhylomeDB" id="Q70KL3"/>
<dbReference type="BioGRID-ORCS" id="360214">
    <property type="hits" value="4 hits in 77 CRISPR screens"/>
</dbReference>
<dbReference type="ChiTaRS" id="Defb39">
    <property type="organism name" value="mouse"/>
</dbReference>
<dbReference type="PRO" id="PR:Q70KL3"/>
<dbReference type="Proteomes" id="UP000000589">
    <property type="component" value="Unplaced"/>
</dbReference>
<dbReference type="RNAct" id="Q70KL3">
    <property type="molecule type" value="protein"/>
</dbReference>
<dbReference type="GO" id="GO:0005576">
    <property type="term" value="C:extracellular region"/>
    <property type="evidence" value="ECO:0007669"/>
    <property type="project" value="UniProtKB-SubCell"/>
</dbReference>
<dbReference type="GO" id="GO:0042742">
    <property type="term" value="P:defense response to bacterium"/>
    <property type="evidence" value="ECO:0007669"/>
    <property type="project" value="UniProtKB-KW"/>
</dbReference>
<dbReference type="Gene3D" id="3.10.360.10">
    <property type="entry name" value="Antimicrobial Peptide, Beta-defensin 2, Chain A"/>
    <property type="match status" value="1"/>
</dbReference>
<dbReference type="InterPro" id="IPR001855">
    <property type="entry name" value="Defensin_beta-like"/>
</dbReference>
<dbReference type="PANTHER" id="PTHR21388:SF6">
    <property type="entry name" value="BETA-DEFENSIN 39"/>
    <property type="match status" value="1"/>
</dbReference>
<dbReference type="PANTHER" id="PTHR21388">
    <property type="entry name" value="BETA-DEFENSIN-RELATED"/>
    <property type="match status" value="1"/>
</dbReference>
<dbReference type="Pfam" id="PF00711">
    <property type="entry name" value="Defensin_beta"/>
    <property type="match status" value="1"/>
</dbReference>
<dbReference type="SUPFAM" id="SSF57392">
    <property type="entry name" value="Defensin-like"/>
    <property type="match status" value="1"/>
</dbReference>
<accession>Q70KL3</accession>
<accession>Q7TNV6</accession>
<comment type="function">
    <text evidence="1">Has antibacterial activity.</text>
</comment>
<comment type="subcellular location">
    <subcellularLocation>
        <location evidence="1">Secreted</location>
    </subcellularLocation>
</comment>
<comment type="tissue specificity">
    <text evidence="3">Only expressed in epididymis (caput, corpus and cauda).</text>
</comment>
<comment type="similarity">
    <text evidence="4">Belongs to the beta-defensin family.</text>
</comment>
<organism>
    <name type="scientific">Mus musculus</name>
    <name type="common">Mouse</name>
    <dbReference type="NCBI Taxonomy" id="10090"/>
    <lineage>
        <taxon>Eukaryota</taxon>
        <taxon>Metazoa</taxon>
        <taxon>Chordata</taxon>
        <taxon>Craniata</taxon>
        <taxon>Vertebrata</taxon>
        <taxon>Euteleostomi</taxon>
        <taxon>Mammalia</taxon>
        <taxon>Eutheria</taxon>
        <taxon>Euarchontoglires</taxon>
        <taxon>Glires</taxon>
        <taxon>Rodentia</taxon>
        <taxon>Myomorpha</taxon>
        <taxon>Muroidea</taxon>
        <taxon>Muridae</taxon>
        <taxon>Murinae</taxon>
        <taxon>Mus</taxon>
        <taxon>Mus</taxon>
    </lineage>
</organism>
<gene>
    <name type="primary">Defb39</name>
</gene>
<protein>
    <recommendedName>
        <fullName>Beta-defensin 39</fullName>
        <shortName>BD-39</shortName>
        <shortName>mBD-39</shortName>
    </recommendedName>
    <alternativeName>
        <fullName>Defensin, beta 39</fullName>
    </alternativeName>
</protein>